<accession>A7FQP0</accession>
<feature type="chain" id="PRO_1000019202" description="Enolase">
    <location>
        <begin position="1"/>
        <end position="431"/>
    </location>
</feature>
<feature type="active site" description="Proton donor" evidence="1">
    <location>
        <position position="208"/>
    </location>
</feature>
<feature type="active site" description="Proton acceptor" evidence="1">
    <location>
        <position position="340"/>
    </location>
</feature>
<feature type="binding site" evidence="1">
    <location>
        <position position="166"/>
    </location>
    <ligand>
        <name>(2R)-2-phosphoglycerate</name>
        <dbReference type="ChEBI" id="CHEBI:58289"/>
    </ligand>
</feature>
<feature type="binding site" evidence="1">
    <location>
        <position position="245"/>
    </location>
    <ligand>
        <name>Mg(2+)</name>
        <dbReference type="ChEBI" id="CHEBI:18420"/>
    </ligand>
</feature>
<feature type="binding site" evidence="1">
    <location>
        <position position="288"/>
    </location>
    <ligand>
        <name>Mg(2+)</name>
        <dbReference type="ChEBI" id="CHEBI:18420"/>
    </ligand>
</feature>
<feature type="binding site" evidence="1">
    <location>
        <position position="315"/>
    </location>
    <ligand>
        <name>Mg(2+)</name>
        <dbReference type="ChEBI" id="CHEBI:18420"/>
    </ligand>
</feature>
<feature type="binding site" evidence="1">
    <location>
        <position position="340"/>
    </location>
    <ligand>
        <name>(2R)-2-phosphoglycerate</name>
        <dbReference type="ChEBI" id="CHEBI:58289"/>
    </ligand>
</feature>
<feature type="binding site" evidence="1">
    <location>
        <position position="369"/>
    </location>
    <ligand>
        <name>(2R)-2-phosphoglycerate</name>
        <dbReference type="ChEBI" id="CHEBI:58289"/>
    </ligand>
</feature>
<feature type="binding site" evidence="1">
    <location>
        <position position="370"/>
    </location>
    <ligand>
        <name>(2R)-2-phosphoglycerate</name>
        <dbReference type="ChEBI" id="CHEBI:58289"/>
    </ligand>
</feature>
<feature type="binding site" evidence="1">
    <location>
        <position position="391"/>
    </location>
    <ligand>
        <name>(2R)-2-phosphoglycerate</name>
        <dbReference type="ChEBI" id="CHEBI:58289"/>
    </ligand>
</feature>
<protein>
    <recommendedName>
        <fullName evidence="1">Enolase</fullName>
        <ecNumber evidence="1">4.2.1.11</ecNumber>
    </recommendedName>
    <alternativeName>
        <fullName evidence="1">2-phospho-D-glycerate hydro-lyase</fullName>
    </alternativeName>
    <alternativeName>
        <fullName evidence="1">2-phosphoglycerate dehydratase</fullName>
    </alternativeName>
</protein>
<dbReference type="EC" id="4.2.1.11" evidence="1"/>
<dbReference type="EMBL" id="CP000726">
    <property type="protein sequence ID" value="ABS34444.1"/>
    <property type="molecule type" value="Genomic_DNA"/>
</dbReference>
<dbReference type="RefSeq" id="WP_011986049.1">
    <property type="nucleotide sequence ID" value="NC_009697.1"/>
</dbReference>
<dbReference type="SMR" id="A7FQP0"/>
<dbReference type="KEGG" id="cba:CLB_0271"/>
<dbReference type="HOGENOM" id="CLU_031223_2_1_9"/>
<dbReference type="UniPathway" id="UPA00109">
    <property type="reaction ID" value="UER00187"/>
</dbReference>
<dbReference type="GO" id="GO:0009986">
    <property type="term" value="C:cell surface"/>
    <property type="evidence" value="ECO:0007669"/>
    <property type="project" value="UniProtKB-SubCell"/>
</dbReference>
<dbReference type="GO" id="GO:0005576">
    <property type="term" value="C:extracellular region"/>
    <property type="evidence" value="ECO:0007669"/>
    <property type="project" value="UniProtKB-SubCell"/>
</dbReference>
<dbReference type="GO" id="GO:0000015">
    <property type="term" value="C:phosphopyruvate hydratase complex"/>
    <property type="evidence" value="ECO:0007669"/>
    <property type="project" value="InterPro"/>
</dbReference>
<dbReference type="GO" id="GO:0000287">
    <property type="term" value="F:magnesium ion binding"/>
    <property type="evidence" value="ECO:0007669"/>
    <property type="project" value="UniProtKB-UniRule"/>
</dbReference>
<dbReference type="GO" id="GO:0004634">
    <property type="term" value="F:phosphopyruvate hydratase activity"/>
    <property type="evidence" value="ECO:0007669"/>
    <property type="project" value="UniProtKB-UniRule"/>
</dbReference>
<dbReference type="GO" id="GO:0006096">
    <property type="term" value="P:glycolytic process"/>
    <property type="evidence" value="ECO:0007669"/>
    <property type="project" value="UniProtKB-UniRule"/>
</dbReference>
<dbReference type="CDD" id="cd03313">
    <property type="entry name" value="enolase"/>
    <property type="match status" value="1"/>
</dbReference>
<dbReference type="FunFam" id="3.20.20.120:FF:000001">
    <property type="entry name" value="Enolase"/>
    <property type="match status" value="1"/>
</dbReference>
<dbReference type="FunFam" id="3.30.390.10:FF:000001">
    <property type="entry name" value="Enolase"/>
    <property type="match status" value="1"/>
</dbReference>
<dbReference type="Gene3D" id="3.20.20.120">
    <property type="entry name" value="Enolase-like C-terminal domain"/>
    <property type="match status" value="1"/>
</dbReference>
<dbReference type="Gene3D" id="3.30.390.10">
    <property type="entry name" value="Enolase-like, N-terminal domain"/>
    <property type="match status" value="1"/>
</dbReference>
<dbReference type="HAMAP" id="MF_00318">
    <property type="entry name" value="Enolase"/>
    <property type="match status" value="1"/>
</dbReference>
<dbReference type="InterPro" id="IPR000941">
    <property type="entry name" value="Enolase"/>
</dbReference>
<dbReference type="InterPro" id="IPR036849">
    <property type="entry name" value="Enolase-like_C_sf"/>
</dbReference>
<dbReference type="InterPro" id="IPR029017">
    <property type="entry name" value="Enolase-like_N"/>
</dbReference>
<dbReference type="InterPro" id="IPR020810">
    <property type="entry name" value="Enolase_C"/>
</dbReference>
<dbReference type="InterPro" id="IPR020809">
    <property type="entry name" value="Enolase_CS"/>
</dbReference>
<dbReference type="InterPro" id="IPR020811">
    <property type="entry name" value="Enolase_N"/>
</dbReference>
<dbReference type="NCBIfam" id="TIGR01060">
    <property type="entry name" value="eno"/>
    <property type="match status" value="1"/>
</dbReference>
<dbReference type="PANTHER" id="PTHR11902">
    <property type="entry name" value="ENOLASE"/>
    <property type="match status" value="1"/>
</dbReference>
<dbReference type="PANTHER" id="PTHR11902:SF1">
    <property type="entry name" value="ENOLASE"/>
    <property type="match status" value="1"/>
</dbReference>
<dbReference type="Pfam" id="PF00113">
    <property type="entry name" value="Enolase_C"/>
    <property type="match status" value="1"/>
</dbReference>
<dbReference type="Pfam" id="PF03952">
    <property type="entry name" value="Enolase_N"/>
    <property type="match status" value="1"/>
</dbReference>
<dbReference type="PIRSF" id="PIRSF001400">
    <property type="entry name" value="Enolase"/>
    <property type="match status" value="1"/>
</dbReference>
<dbReference type="PRINTS" id="PR00148">
    <property type="entry name" value="ENOLASE"/>
</dbReference>
<dbReference type="SFLD" id="SFLDS00001">
    <property type="entry name" value="Enolase"/>
    <property type="match status" value="1"/>
</dbReference>
<dbReference type="SFLD" id="SFLDF00002">
    <property type="entry name" value="enolase"/>
    <property type="match status" value="1"/>
</dbReference>
<dbReference type="SMART" id="SM01192">
    <property type="entry name" value="Enolase_C"/>
    <property type="match status" value="1"/>
</dbReference>
<dbReference type="SMART" id="SM01193">
    <property type="entry name" value="Enolase_N"/>
    <property type="match status" value="1"/>
</dbReference>
<dbReference type="SUPFAM" id="SSF51604">
    <property type="entry name" value="Enolase C-terminal domain-like"/>
    <property type="match status" value="1"/>
</dbReference>
<dbReference type="SUPFAM" id="SSF54826">
    <property type="entry name" value="Enolase N-terminal domain-like"/>
    <property type="match status" value="1"/>
</dbReference>
<dbReference type="PROSITE" id="PS00164">
    <property type="entry name" value="ENOLASE"/>
    <property type="match status" value="1"/>
</dbReference>
<name>ENO_CLOB1</name>
<proteinExistence type="inferred from homology"/>
<evidence type="ECO:0000255" key="1">
    <source>
        <dbReference type="HAMAP-Rule" id="MF_00318"/>
    </source>
</evidence>
<keyword id="KW-0963">Cytoplasm</keyword>
<keyword id="KW-0324">Glycolysis</keyword>
<keyword id="KW-0456">Lyase</keyword>
<keyword id="KW-0460">Magnesium</keyword>
<keyword id="KW-0479">Metal-binding</keyword>
<keyword id="KW-0964">Secreted</keyword>
<organism>
    <name type="scientific">Clostridium botulinum (strain ATCC 19397 / Type A)</name>
    <dbReference type="NCBI Taxonomy" id="441770"/>
    <lineage>
        <taxon>Bacteria</taxon>
        <taxon>Bacillati</taxon>
        <taxon>Bacillota</taxon>
        <taxon>Clostridia</taxon>
        <taxon>Eubacteriales</taxon>
        <taxon>Clostridiaceae</taxon>
        <taxon>Clostridium</taxon>
    </lineage>
</organism>
<gene>
    <name evidence="1" type="primary">eno</name>
    <name type="ordered locus">CLB_0271</name>
</gene>
<reference key="1">
    <citation type="journal article" date="2007" name="PLoS ONE">
        <title>Analysis of the neurotoxin complex genes in Clostridium botulinum A1-A4 and B1 strains: BoNT/A3, /Ba4 and /B1 clusters are located within plasmids.</title>
        <authorList>
            <person name="Smith T.J."/>
            <person name="Hill K.K."/>
            <person name="Foley B.T."/>
            <person name="Detter J.C."/>
            <person name="Munk A.C."/>
            <person name="Bruce D.C."/>
            <person name="Doggett N.A."/>
            <person name="Smith L.A."/>
            <person name="Marks J.D."/>
            <person name="Xie G."/>
            <person name="Brettin T.S."/>
        </authorList>
    </citation>
    <scope>NUCLEOTIDE SEQUENCE [LARGE SCALE GENOMIC DNA]</scope>
    <source>
        <strain>ATCC 19397 / Type A</strain>
    </source>
</reference>
<comment type="function">
    <text evidence="1">Catalyzes the reversible conversion of 2-phosphoglycerate (2-PG) into phosphoenolpyruvate (PEP). It is essential for the degradation of carbohydrates via glycolysis.</text>
</comment>
<comment type="catalytic activity">
    <reaction evidence="1">
        <text>(2R)-2-phosphoglycerate = phosphoenolpyruvate + H2O</text>
        <dbReference type="Rhea" id="RHEA:10164"/>
        <dbReference type="ChEBI" id="CHEBI:15377"/>
        <dbReference type="ChEBI" id="CHEBI:58289"/>
        <dbReference type="ChEBI" id="CHEBI:58702"/>
        <dbReference type="EC" id="4.2.1.11"/>
    </reaction>
</comment>
<comment type="cofactor">
    <cofactor evidence="1">
        <name>Mg(2+)</name>
        <dbReference type="ChEBI" id="CHEBI:18420"/>
    </cofactor>
    <text evidence="1">Binds a second Mg(2+) ion via substrate during catalysis.</text>
</comment>
<comment type="pathway">
    <text evidence="1">Carbohydrate degradation; glycolysis; pyruvate from D-glyceraldehyde 3-phosphate: step 4/5.</text>
</comment>
<comment type="subcellular location">
    <subcellularLocation>
        <location evidence="1">Cytoplasm</location>
    </subcellularLocation>
    <subcellularLocation>
        <location evidence="1">Secreted</location>
    </subcellularLocation>
    <subcellularLocation>
        <location evidence="1">Cell surface</location>
    </subcellularLocation>
    <text evidence="1">Fractions of enolase are present in both the cytoplasm and on the cell surface.</text>
</comment>
<comment type="similarity">
    <text evidence="1">Belongs to the enolase family.</text>
</comment>
<sequence>MKNYIEIVDVYARQILDSRCNPTVEVEVELEDGTVGVAAVPSGASTGAFEAVELRDGDKSKYLGKGVLKAVDNVNTIIADELVGMNVLDQVAIDKTMIELDGTDNKAKLGANAMLGVSLACAKAAANSLGMSLYQYIGGVNGKVLPVPMMNIINGGKHADNNVDLQEFMIMPAGAPSFSEALRMCSEVYHALKSTLKAQGYDTGVGDEGGFAPNLKSNEEAIVVIIEAIKKAGYTPGEDIFIALDPASSEIFEDGKYNLAGEGRVLTPEEMANYYVELAEKYPIISIEDGMAEEDWDGWKILTEKIGNKVQLVGDDLFVTNTERLSKGIKLGVANSILIKLNQIGTLTETLNAIEMAERAGYTAVVSHRSGETEDTTIADLVVAVNAGQIKTGAPARSERVAKYNQLLRIEEELNDMGEYRGLKAFYNINK</sequence>